<gene>
    <name type="ordered locus">Mbar_A1652</name>
</gene>
<dbReference type="EC" id="3.6.1.9" evidence="1"/>
<dbReference type="EMBL" id="CP000099">
    <property type="protein sequence ID" value="AAZ70596.1"/>
    <property type="molecule type" value="Genomic_DNA"/>
</dbReference>
<dbReference type="SMR" id="Q46BZ6"/>
<dbReference type="STRING" id="269797.Mbar_A1652"/>
<dbReference type="PaxDb" id="269797-Mbar_A1652"/>
<dbReference type="KEGG" id="mba:Mbar_A1652"/>
<dbReference type="eggNOG" id="arCOG05007">
    <property type="taxonomic scope" value="Archaea"/>
</dbReference>
<dbReference type="HOGENOM" id="CLU_040416_0_0_2"/>
<dbReference type="OrthoDB" id="45223at2157"/>
<dbReference type="GO" id="GO:0005737">
    <property type="term" value="C:cytoplasm"/>
    <property type="evidence" value="ECO:0007669"/>
    <property type="project" value="UniProtKB-SubCell"/>
</dbReference>
<dbReference type="GO" id="GO:0036218">
    <property type="term" value="F:dTTP diphosphatase activity"/>
    <property type="evidence" value="ECO:0007669"/>
    <property type="project" value="RHEA"/>
</dbReference>
<dbReference type="GO" id="GO:0036221">
    <property type="term" value="F:UTP diphosphatase activity"/>
    <property type="evidence" value="ECO:0007669"/>
    <property type="project" value="RHEA"/>
</dbReference>
<dbReference type="GO" id="GO:0009117">
    <property type="term" value="P:nucleotide metabolic process"/>
    <property type="evidence" value="ECO:0007669"/>
    <property type="project" value="UniProtKB-KW"/>
</dbReference>
<dbReference type="CDD" id="cd00555">
    <property type="entry name" value="Maf"/>
    <property type="match status" value="1"/>
</dbReference>
<dbReference type="Gene3D" id="3.90.950.10">
    <property type="match status" value="1"/>
</dbReference>
<dbReference type="HAMAP" id="MF_00528">
    <property type="entry name" value="Maf"/>
    <property type="match status" value="1"/>
</dbReference>
<dbReference type="InterPro" id="IPR029001">
    <property type="entry name" value="ITPase-like_fam"/>
</dbReference>
<dbReference type="InterPro" id="IPR003697">
    <property type="entry name" value="Maf-like"/>
</dbReference>
<dbReference type="NCBIfam" id="TIGR00172">
    <property type="entry name" value="maf"/>
    <property type="match status" value="1"/>
</dbReference>
<dbReference type="NCBIfam" id="NF010945">
    <property type="entry name" value="PRK14365.1"/>
    <property type="match status" value="1"/>
</dbReference>
<dbReference type="PANTHER" id="PTHR43213">
    <property type="entry name" value="BIFUNCTIONAL DTTP/UTP PYROPHOSPHATASE/METHYLTRANSFERASE PROTEIN-RELATED"/>
    <property type="match status" value="1"/>
</dbReference>
<dbReference type="PANTHER" id="PTHR43213:SF5">
    <property type="entry name" value="BIFUNCTIONAL DTTP_UTP PYROPHOSPHATASE_METHYLTRANSFERASE PROTEIN-RELATED"/>
    <property type="match status" value="1"/>
</dbReference>
<dbReference type="Pfam" id="PF02545">
    <property type="entry name" value="Maf"/>
    <property type="match status" value="1"/>
</dbReference>
<dbReference type="PIRSF" id="PIRSF006305">
    <property type="entry name" value="Maf"/>
    <property type="match status" value="1"/>
</dbReference>
<dbReference type="SUPFAM" id="SSF52972">
    <property type="entry name" value="ITPase-like"/>
    <property type="match status" value="1"/>
</dbReference>
<accession>Q46BZ6</accession>
<comment type="function">
    <text evidence="1">Nucleoside triphosphate pyrophosphatase that hydrolyzes dTTP and UTP. May have a dual role in cell division arrest and in preventing the incorporation of modified nucleotides into cellular nucleic acids.</text>
</comment>
<comment type="catalytic activity">
    <reaction evidence="1">
        <text>dTTP + H2O = dTMP + diphosphate + H(+)</text>
        <dbReference type="Rhea" id="RHEA:28534"/>
        <dbReference type="ChEBI" id="CHEBI:15377"/>
        <dbReference type="ChEBI" id="CHEBI:15378"/>
        <dbReference type="ChEBI" id="CHEBI:33019"/>
        <dbReference type="ChEBI" id="CHEBI:37568"/>
        <dbReference type="ChEBI" id="CHEBI:63528"/>
        <dbReference type="EC" id="3.6.1.9"/>
    </reaction>
</comment>
<comment type="catalytic activity">
    <reaction evidence="1">
        <text>UTP + H2O = UMP + diphosphate + H(+)</text>
        <dbReference type="Rhea" id="RHEA:29395"/>
        <dbReference type="ChEBI" id="CHEBI:15377"/>
        <dbReference type="ChEBI" id="CHEBI:15378"/>
        <dbReference type="ChEBI" id="CHEBI:33019"/>
        <dbReference type="ChEBI" id="CHEBI:46398"/>
        <dbReference type="ChEBI" id="CHEBI:57865"/>
        <dbReference type="EC" id="3.6.1.9"/>
    </reaction>
</comment>
<comment type="cofactor">
    <cofactor evidence="1">
        <name>a divalent metal cation</name>
        <dbReference type="ChEBI" id="CHEBI:60240"/>
    </cofactor>
</comment>
<comment type="subcellular location">
    <subcellularLocation>
        <location evidence="1">Cytoplasm</location>
    </subcellularLocation>
</comment>
<comment type="similarity">
    <text evidence="1">Belongs to the Maf family. YhdE subfamily.</text>
</comment>
<proteinExistence type="inferred from homology"/>
<reference key="1">
    <citation type="journal article" date="2006" name="J. Bacteriol.">
        <title>The Methanosarcina barkeri genome: comparative analysis with Methanosarcina acetivorans and Methanosarcina mazei reveals extensive rearrangement within methanosarcinal genomes.</title>
        <authorList>
            <person name="Maeder D.L."/>
            <person name="Anderson I."/>
            <person name="Brettin T.S."/>
            <person name="Bruce D.C."/>
            <person name="Gilna P."/>
            <person name="Han C.S."/>
            <person name="Lapidus A."/>
            <person name="Metcalf W.W."/>
            <person name="Saunders E."/>
            <person name="Tapia R."/>
            <person name="Sowers K.R."/>
        </authorList>
    </citation>
    <scope>NUCLEOTIDE SEQUENCE [LARGE SCALE GENOMIC DNA]</scope>
    <source>
        <strain>Fusaro / DSM 804</strain>
    </source>
</reference>
<protein>
    <recommendedName>
        <fullName evidence="1">dTTP/UTP pyrophosphatase</fullName>
        <shortName evidence="1">dTTPase/UTPase</shortName>
        <ecNumber evidence="1">3.6.1.9</ecNumber>
    </recommendedName>
    <alternativeName>
        <fullName evidence="1">Nucleoside triphosphate pyrophosphatase</fullName>
    </alternativeName>
    <alternativeName>
        <fullName evidence="1">Nucleotide pyrophosphatase</fullName>
        <shortName evidence="1">Nucleotide PPase</shortName>
    </alternativeName>
</protein>
<organism>
    <name type="scientific">Methanosarcina barkeri (strain Fusaro / DSM 804)</name>
    <dbReference type="NCBI Taxonomy" id="269797"/>
    <lineage>
        <taxon>Archaea</taxon>
        <taxon>Methanobacteriati</taxon>
        <taxon>Methanobacteriota</taxon>
        <taxon>Stenosarchaea group</taxon>
        <taxon>Methanomicrobia</taxon>
        <taxon>Methanosarcinales</taxon>
        <taxon>Methanosarcinaceae</taxon>
        <taxon>Methanosarcina</taxon>
    </lineage>
</organism>
<name>NTPPA_METBF</name>
<sequence length="197" mass="21547">MRQIILASASPRRKELLKQLIGDNFLVYASSYEESPCPGMHPKELLLKHSAEKARDVAKHFNSGLVISADTSVFFNGELLGKPKSSEEAEKMLKLLSGQRFLVITGLTVLDLDSGKEISELKSTTVWMDKISNEQISAYVRTGEPLDKAGAFAVQGKGAAFVEKIEGDFFNVVGLPLFRLGKILQKAGVSIFEEGLS</sequence>
<feature type="chain" id="PRO_0000267481" description="dTTP/UTP pyrophosphatase">
    <location>
        <begin position="1"/>
        <end position="197"/>
    </location>
</feature>
<feature type="active site" description="Proton acceptor" evidence="1">
    <location>
        <position position="70"/>
    </location>
</feature>
<feature type="site" description="Important for substrate specificity" evidence="1">
    <location>
        <position position="12"/>
    </location>
</feature>
<feature type="site" description="Important for substrate specificity" evidence="1">
    <location>
        <position position="71"/>
    </location>
</feature>
<feature type="site" description="Important for substrate specificity" evidence="1">
    <location>
        <position position="155"/>
    </location>
</feature>
<keyword id="KW-0963">Cytoplasm</keyword>
<keyword id="KW-0378">Hydrolase</keyword>
<keyword id="KW-0546">Nucleotide metabolism</keyword>
<evidence type="ECO:0000255" key="1">
    <source>
        <dbReference type="HAMAP-Rule" id="MF_00528"/>
    </source>
</evidence>